<protein>
    <recommendedName>
        <fullName>Uncharacterized protein llmg_1573</fullName>
    </recommendedName>
    <alternativeName>
        <fullName>ORF4</fullName>
    </alternativeName>
</protein>
<gene>
    <name type="ordered locus">llmg_1573</name>
</gene>
<sequence>MERLEKRGQGLENFKKYNFEFYIIILFITILATFPFYRGNFHAGNDFAFNYARVMSTISALKDGQVIPQFDPNALSGFGYAWNEFYGPLPTYFISVIKFIVKSWSLSFSLFYSLCLFISGIFIFNFSSFLLKDHTNSKLFGLLAVALFTFSNSTYINLYYYANPSQPLALLFVILLFWGMNKMFNKRSFAAFLMVAFGAAGLPLSHTVTTICTLPFVLLYLLFLIIKKGNLKENIKIIGLGFLSVTSAIGLSAFFLFPLLENLKSGIYNVSNSDFSRSFGWNNIAYFQGKWEPLYKIEFSYYKFPSLLFVFIVLFIFIFSLINFKKTNAKYSLIFSCFSLVLVLMQLPIFPWKLFSIFTIVQDPARFSTLFGLFSALSLVLILPILLDKISGKTSYYLTIGLLVIFSILGFAEFRNRIQKGSQPLFASAQSLLNKTPFNYMENPDSIAIGEYLPQVIGSHNQPYEKTIQQFYKDKNVYGMRNQAMTYLSQRGKLPEGLAKSIQISDYSKKGSHVTFTATTGSKSASVEIPEIYYKGFIAFTKEGNKKIKLTSQISKNGFLEIKVPAKFSGKIYSYFAMSSATKYGVLLSLLTFVSLLIILITKTFIKRKLSKDK</sequence>
<feature type="chain" id="PRO_0000066196" description="Uncharacterized protein llmg_1573">
    <location>
        <begin position="1"/>
        <end position="614"/>
    </location>
</feature>
<proteinExistence type="predicted"/>
<dbReference type="EMBL" id="X76642">
    <property type="protein sequence ID" value="CAA54090.1"/>
    <property type="molecule type" value="Genomic_DNA"/>
</dbReference>
<dbReference type="EMBL" id="AM406671">
    <property type="protein sequence ID" value="CAL98148.1"/>
    <property type="molecule type" value="Genomic_DNA"/>
</dbReference>
<dbReference type="PIR" id="S40085">
    <property type="entry name" value="S40085"/>
</dbReference>
<dbReference type="RefSeq" id="WP_011835407.1">
    <property type="nucleotide sequence ID" value="NC_009004.1"/>
</dbReference>
<dbReference type="STRING" id="416870.llmg_1573"/>
<dbReference type="KEGG" id="llm:llmg_1573"/>
<dbReference type="eggNOG" id="COG5617">
    <property type="taxonomic scope" value="Bacteria"/>
</dbReference>
<dbReference type="HOGENOM" id="CLU_450402_0_0_9"/>
<dbReference type="OrthoDB" id="2242726at2"/>
<dbReference type="Proteomes" id="UP000000364">
    <property type="component" value="Chromosome"/>
</dbReference>
<dbReference type="InterPro" id="IPR018776">
    <property type="entry name" value="Membrane_prot_PTPS-rel_domain"/>
</dbReference>
<dbReference type="Pfam" id="PF10131">
    <property type="entry name" value="PTPS_related"/>
    <property type="match status" value="1"/>
</dbReference>
<accession>P42377</accession>
<accession>A2RLI0</accession>
<reference key="1">
    <citation type="journal article" date="1993" name="J. Gen. Microbiol.">
        <title>Cloning and sequence analysis of the dnaK gene region of Lactococcus lactis subsp. lactis.</title>
        <authorList>
            <person name="Eaton T.J."/>
            <person name="Shearman C.A."/>
            <person name="Gasson M.J."/>
        </authorList>
    </citation>
    <scope>NUCLEOTIDE SEQUENCE [GENOMIC DNA]</scope>
</reference>
<reference key="2">
    <citation type="journal article" date="2007" name="J. Bacteriol.">
        <title>The complete genome sequence of the lactic acid bacterial paradigm Lactococcus lactis subsp. cremoris MG1363.</title>
        <authorList>
            <person name="Wegmann U."/>
            <person name="O'Connell-Motherway M."/>
            <person name="Zomer A."/>
            <person name="Buist G."/>
            <person name="Shearman C."/>
            <person name="Canchaya C."/>
            <person name="Ventura M."/>
            <person name="Goesmann A."/>
            <person name="Gasson M.J."/>
            <person name="Kuipers O.P."/>
            <person name="van Sinderen D."/>
            <person name="Kok J."/>
        </authorList>
    </citation>
    <scope>NUCLEOTIDE SEQUENCE [LARGE SCALE GENOMIC DNA]</scope>
    <source>
        <strain>MG1363</strain>
    </source>
</reference>
<name>Y1573_LACLM</name>
<organism>
    <name type="scientific">Lactococcus lactis subsp. cremoris (strain MG1363)</name>
    <dbReference type="NCBI Taxonomy" id="416870"/>
    <lineage>
        <taxon>Bacteria</taxon>
        <taxon>Bacillati</taxon>
        <taxon>Bacillota</taxon>
        <taxon>Bacilli</taxon>
        <taxon>Lactobacillales</taxon>
        <taxon>Streptococcaceae</taxon>
        <taxon>Lactococcus</taxon>
        <taxon>Lactococcus cremoris subsp. cremoris</taxon>
    </lineage>
</organism>